<accession>A5UGR1</accession>
<evidence type="ECO:0000255" key="1">
    <source>
        <dbReference type="HAMAP-Rule" id="MF_00460"/>
    </source>
</evidence>
<dbReference type="EMBL" id="CP000672">
    <property type="protein sequence ID" value="ABQ99966.1"/>
    <property type="molecule type" value="Genomic_DNA"/>
</dbReference>
<dbReference type="SMR" id="A5UGR1"/>
<dbReference type="KEGG" id="hiq:CGSHiGG_05150"/>
<dbReference type="HOGENOM" id="CLU_150721_1_0_6"/>
<dbReference type="Proteomes" id="UP000001990">
    <property type="component" value="Chromosome"/>
</dbReference>
<dbReference type="Gene3D" id="3.10.20.280">
    <property type="entry name" value="RnfH-like"/>
    <property type="match status" value="1"/>
</dbReference>
<dbReference type="HAMAP" id="MF_00460">
    <property type="entry name" value="UPF0125_RnfH"/>
    <property type="match status" value="1"/>
</dbReference>
<dbReference type="InterPro" id="IPR016155">
    <property type="entry name" value="Mopterin_synth/thiamin_S_b"/>
</dbReference>
<dbReference type="InterPro" id="IPR005346">
    <property type="entry name" value="RnfH"/>
</dbReference>
<dbReference type="InterPro" id="IPR037021">
    <property type="entry name" value="RnfH_sf"/>
</dbReference>
<dbReference type="NCBIfam" id="NF002490">
    <property type="entry name" value="PRK01777.1"/>
    <property type="match status" value="1"/>
</dbReference>
<dbReference type="PANTHER" id="PTHR37483">
    <property type="entry name" value="UPF0125 PROTEIN RATB"/>
    <property type="match status" value="1"/>
</dbReference>
<dbReference type="PANTHER" id="PTHR37483:SF1">
    <property type="entry name" value="UPF0125 PROTEIN RATB"/>
    <property type="match status" value="1"/>
</dbReference>
<dbReference type="Pfam" id="PF03658">
    <property type="entry name" value="Ub-RnfH"/>
    <property type="match status" value="1"/>
</dbReference>
<dbReference type="SUPFAM" id="SSF54285">
    <property type="entry name" value="MoaD/ThiS"/>
    <property type="match status" value="1"/>
</dbReference>
<sequence length="102" mass="11584">MNQINIEIAYAFPERYYLKSFQVDEGITVQTAITQSGILSQFPEIDLSTNKIGIFSRPIKLTDVLKEGDRIEIYRPLLADPKEIRRKRAAEQAAAKDKEKGA</sequence>
<protein>
    <recommendedName>
        <fullName evidence="1">Protein RnfH</fullName>
    </recommendedName>
</protein>
<comment type="similarity">
    <text evidence="1">Belongs to the UPF0125 (RnfH) family.</text>
</comment>
<feature type="chain" id="PRO_1000013576" description="Protein RnfH">
    <location>
        <begin position="1"/>
        <end position="102"/>
    </location>
</feature>
<reference key="1">
    <citation type="journal article" date="2007" name="Genome Biol.">
        <title>Characterization and modeling of the Haemophilus influenzae core and supragenomes based on the complete genomic sequences of Rd and 12 clinical nontypeable strains.</title>
        <authorList>
            <person name="Hogg J.S."/>
            <person name="Hu F.Z."/>
            <person name="Janto B."/>
            <person name="Boissy R."/>
            <person name="Hayes J."/>
            <person name="Keefe R."/>
            <person name="Post J.C."/>
            <person name="Ehrlich G.D."/>
        </authorList>
    </citation>
    <scope>NUCLEOTIDE SEQUENCE [LARGE SCALE GENOMIC DNA]</scope>
    <source>
        <strain>PittGG</strain>
    </source>
</reference>
<name>RNFH_HAEIG</name>
<proteinExistence type="inferred from homology"/>
<gene>
    <name evidence="1" type="primary">rnfH</name>
    <name type="ordered locus">CGSHiGG_05150</name>
</gene>
<organism>
    <name type="scientific">Haemophilus influenzae (strain PittGG)</name>
    <dbReference type="NCBI Taxonomy" id="374931"/>
    <lineage>
        <taxon>Bacteria</taxon>
        <taxon>Pseudomonadati</taxon>
        <taxon>Pseudomonadota</taxon>
        <taxon>Gammaproteobacteria</taxon>
        <taxon>Pasteurellales</taxon>
        <taxon>Pasteurellaceae</taxon>
        <taxon>Haemophilus</taxon>
    </lineage>
</organism>